<sequence length="234" mass="26136">MERGGFHGYRKLSVNNTTPSPPGLAANFLMAEGSMRPPEFNQPNKTSNGGEEECTVREQDRFMPIANVIRIMRRILPAHAKISDDSKETIQECVSEYISFITGEANERCQREQRKTITAEDVLWAMSKLGFDDYIEPLTLYLHRYRELEGERGVSCSAGSVSMTNGLVVKRPNGTMTEYGAYGPVPGIHMAQYHYRHQNGFVFSGNEPNSKMSGSSSGASGARVEVFPTQQHKY</sequence>
<reference key="1">
    <citation type="journal article" date="2003" name="Plant Cell">
        <title>LEAFY COTYLEDON1-LIKE defines a class of regulators essential for embryo development.</title>
        <authorList>
            <person name="Kwong R.W."/>
            <person name="Bui A.Q."/>
            <person name="Lee H."/>
            <person name="Kwong L.W."/>
            <person name="Fischer R.L."/>
            <person name="Goldberg R.B."/>
            <person name="Harada J.J."/>
        </authorList>
    </citation>
    <scope>NUCLEOTIDE SEQUENCE [MRNA] (ISOFORM 1)</scope>
    <scope>TISSUE SPECIFICITY</scope>
    <scope>DEVELOPMENTAL STAGE</scope>
    <scope>FUNCTION</scope>
</reference>
<reference key="2">
    <citation type="submission" date="1999-04" db="EMBL/GenBank/DDBJ databases">
        <title>Structural analysis of Arabidopsis thaliana chromosome 5. XI.</title>
        <authorList>
            <person name="Kaneko T."/>
            <person name="Katoh T."/>
            <person name="Asamizu E."/>
            <person name="Sato S."/>
            <person name="Nakamura Y."/>
            <person name="Kotani H."/>
            <person name="Tabata S."/>
        </authorList>
    </citation>
    <scope>NUCLEOTIDE SEQUENCE [LARGE SCALE GENOMIC DNA]</scope>
    <source>
        <strain>cv. Columbia</strain>
    </source>
</reference>
<reference key="3">
    <citation type="journal article" date="2017" name="Plant J.">
        <title>Araport11: a complete reannotation of the Arabidopsis thaliana reference genome.</title>
        <authorList>
            <person name="Cheng C.Y."/>
            <person name="Krishnakumar V."/>
            <person name="Chan A.P."/>
            <person name="Thibaud-Nissen F."/>
            <person name="Schobel S."/>
            <person name="Town C.D."/>
        </authorList>
    </citation>
    <scope>GENOME REANNOTATION</scope>
    <source>
        <strain>cv. Columbia</strain>
    </source>
</reference>
<reference key="4">
    <citation type="journal article" date="2003" name="Science">
        <title>Empirical analysis of transcriptional activity in the Arabidopsis genome.</title>
        <authorList>
            <person name="Yamada K."/>
            <person name="Lim J."/>
            <person name="Dale J.M."/>
            <person name="Chen H."/>
            <person name="Shinn P."/>
            <person name="Palm C.J."/>
            <person name="Southwick A.M."/>
            <person name="Wu H.C."/>
            <person name="Kim C.J."/>
            <person name="Nguyen M."/>
            <person name="Pham P.K."/>
            <person name="Cheuk R.F."/>
            <person name="Karlin-Newmann G."/>
            <person name="Liu S.X."/>
            <person name="Lam B."/>
            <person name="Sakano H."/>
            <person name="Wu T."/>
            <person name="Yu G."/>
            <person name="Miranda M."/>
            <person name="Quach H.L."/>
            <person name="Tripp M."/>
            <person name="Chang C.H."/>
            <person name="Lee J.M."/>
            <person name="Toriumi M.J."/>
            <person name="Chan M.M."/>
            <person name="Tang C.C."/>
            <person name="Onodera C.S."/>
            <person name="Deng J.M."/>
            <person name="Akiyama K."/>
            <person name="Ansari Y."/>
            <person name="Arakawa T."/>
            <person name="Banh J."/>
            <person name="Banno F."/>
            <person name="Bowser L."/>
            <person name="Brooks S.Y."/>
            <person name="Carninci P."/>
            <person name="Chao Q."/>
            <person name="Choy N."/>
            <person name="Enju A."/>
            <person name="Goldsmith A.D."/>
            <person name="Gurjal M."/>
            <person name="Hansen N.F."/>
            <person name="Hayashizaki Y."/>
            <person name="Johnson-Hopson C."/>
            <person name="Hsuan V.W."/>
            <person name="Iida K."/>
            <person name="Karnes M."/>
            <person name="Khan S."/>
            <person name="Koesema E."/>
            <person name="Ishida J."/>
            <person name="Jiang P.X."/>
            <person name="Jones T."/>
            <person name="Kawai J."/>
            <person name="Kamiya A."/>
            <person name="Meyers C."/>
            <person name="Nakajima M."/>
            <person name="Narusaka M."/>
            <person name="Seki M."/>
            <person name="Sakurai T."/>
            <person name="Satou M."/>
            <person name="Tamse R."/>
            <person name="Vaysberg M."/>
            <person name="Wallender E.K."/>
            <person name="Wong C."/>
            <person name="Yamamura Y."/>
            <person name="Yuan S."/>
            <person name="Shinozaki K."/>
            <person name="Davis R.W."/>
            <person name="Theologis A."/>
            <person name="Ecker J.R."/>
        </authorList>
    </citation>
    <scope>NUCLEOTIDE SEQUENCE [LARGE SCALE MRNA] (ISOFORM 2)</scope>
    <source>
        <strain>cv. Columbia</strain>
    </source>
</reference>
<reference key="5">
    <citation type="journal article" date="2001" name="Gene">
        <title>Regulation of the CCAAT-binding NF-Y subunits in Arabidopsis thaliana.</title>
        <authorList>
            <person name="Gusmaroli G."/>
            <person name="Tonelli C."/>
            <person name="Mantovani R."/>
        </authorList>
    </citation>
    <scope>TISSUE SPECIFICITY</scope>
</reference>
<reference key="6">
    <citation type="journal article" date="2002" name="Gene">
        <title>Regulation of novel members of the Arabidopsis thaliana CCAAT-binding nuclear factor Y subunits.</title>
        <authorList>
            <person name="Gusmaroli G."/>
            <person name="Tonelli C."/>
            <person name="Mantovani R."/>
        </authorList>
    </citation>
    <scope>GENE FAMILY</scope>
    <scope>NOMENCLATURE</scope>
</reference>
<reference key="7">
    <citation type="journal article" date="2007" name="Plant Physiol.">
        <title>The GCR1, GPA1, PRN1, NF-Y signal chain mediates both blue light and abscisic acid responses in Arabidopsis.</title>
        <authorList>
            <person name="Warpeha K.M."/>
            <person name="Upadhyay S."/>
            <person name="Yeh J."/>
            <person name="Adamiak J."/>
            <person name="Hawkins S.I."/>
            <person name="Lapik Y.R."/>
            <person name="Anderson M.B."/>
            <person name="Kaufman L.S."/>
        </authorList>
    </citation>
    <scope>FUNCTION</scope>
    <scope>DISRUPTION PHENOTYPE</scope>
    <scope>TISSUE SPECIFICITY</scope>
    <scope>INTERACTION WITH PRN1</scope>
    <source>
        <strain>cv. Columbia</strain>
        <strain>cv. Wassilewskija</strain>
    </source>
</reference>
<reference key="8">
    <citation type="journal article" date="2014" name="Plant Cell">
        <title>Arabidopsis DPB3-1, a DREB2A interactor, specifically enhances heat stress-induced gene expression by forming a heat stress-specific transcriptional complex with NF-Y subunits.</title>
        <authorList>
            <person name="Sato H."/>
            <person name="Mizoi J."/>
            <person name="Tanaka H."/>
            <person name="Maruyama K."/>
            <person name="Qin F."/>
            <person name="Osakabe Y."/>
            <person name="Morimoto K."/>
            <person name="Ohori T."/>
            <person name="Kusakabe K."/>
            <person name="Nagata M."/>
            <person name="Shinozaki K."/>
            <person name="Yamaguchi-Shinozaki K."/>
        </authorList>
    </citation>
    <scope>INTERACTION WITH DPB3-1</scope>
    <scope>INDUCTION BY DEHYDRATION</scope>
    <source>
        <strain>cv. Columbia</strain>
    </source>
</reference>
<reference key="9">
    <citation type="journal article" date="2016" name="Front. Plant Sci.">
        <title>The Arabidopsis thaliana Nuclear Factor Y Transcription Factors.</title>
        <authorList>
            <person name="Zhao H."/>
            <person name="Wu D."/>
            <person name="Kong F."/>
            <person name="Lin K."/>
            <person name="Zhang H."/>
            <person name="Li G."/>
        </authorList>
    </citation>
    <scope>REVIEW</scope>
</reference>
<reference key="10">
    <citation type="journal article" date="2017" name="Mol. Plant">
        <title>Crystal Structure of the Arabidopsis thaliana L1L/NF-YC3 Histone-fold Dimer Reveals Specificities of the LEC1 Family of NF-Y Subunits in Plants.</title>
        <authorList>
            <person name="Gnesutta N."/>
            <person name="Saad D."/>
            <person name="Chaves-Sanjuan A."/>
            <person name="Mantovani R."/>
            <person name="Nardini M."/>
        </authorList>
    </citation>
    <scope>X-RAY CRYSTALLOGRAPHY (2.30 ANGSTROMS) OF 55-147</scope>
    <scope>SUBUNIT</scope>
</reference>
<organism>
    <name type="scientific">Arabidopsis thaliana</name>
    <name type="common">Mouse-ear cress</name>
    <dbReference type="NCBI Taxonomy" id="3702"/>
    <lineage>
        <taxon>Eukaryota</taxon>
        <taxon>Viridiplantae</taxon>
        <taxon>Streptophyta</taxon>
        <taxon>Embryophyta</taxon>
        <taxon>Tracheophyta</taxon>
        <taxon>Spermatophyta</taxon>
        <taxon>Magnoliopsida</taxon>
        <taxon>eudicotyledons</taxon>
        <taxon>Gunneridae</taxon>
        <taxon>Pentapetalae</taxon>
        <taxon>rosids</taxon>
        <taxon>malvids</taxon>
        <taxon>Brassicales</taxon>
        <taxon>Brassicaceae</taxon>
        <taxon>Camelineae</taxon>
        <taxon>Arabidopsis</taxon>
    </lineage>
</organism>
<protein>
    <recommendedName>
        <fullName evidence="9">Nuclear transcription factor Y subunit B-6</fullName>
        <shortName evidence="9">AtNF-YB-6</shortName>
        <shortName evidence="12">AtNF-YB6</shortName>
    </recommendedName>
    <alternativeName>
        <fullName evidence="10">Protein LEAFY COTYLEDON 1-LIKE</fullName>
    </alternativeName>
</protein>
<feature type="chain" id="PRO_0000204620" description="Nuclear transcription factor Y subunit B-6">
    <location>
        <begin position="1"/>
        <end position="234"/>
    </location>
</feature>
<feature type="DNA-binding region" evidence="2">
    <location>
        <begin position="63"/>
        <end position="69"/>
    </location>
</feature>
<feature type="region of interest" description="Disordered" evidence="3">
    <location>
        <begin position="1"/>
        <end position="21"/>
    </location>
</feature>
<feature type="region of interest" description="Disordered" evidence="3">
    <location>
        <begin position="35"/>
        <end position="55"/>
    </location>
</feature>
<feature type="region of interest" description="Subunit association domain (SAD)" evidence="1">
    <location>
        <begin position="90"/>
        <end position="101"/>
    </location>
</feature>
<feature type="region of interest" description="Disordered" evidence="3">
    <location>
        <begin position="206"/>
        <end position="234"/>
    </location>
</feature>
<feature type="compositionally biased region" description="Low complexity" evidence="3">
    <location>
        <begin position="213"/>
        <end position="222"/>
    </location>
</feature>
<feature type="splice variant" id="VSP_016045" description="In isoform 2." evidence="11">
    <location>
        <begin position="1"/>
        <end position="29"/>
    </location>
</feature>
<feature type="sequence conflict" description="In Ref. 4; AAO42202." evidence="13" ref="4">
    <original>K</original>
    <variation>R</variation>
    <location>
        <position position="81"/>
    </location>
</feature>
<feature type="helix" evidence="16">
    <location>
        <begin position="59"/>
        <end position="61"/>
    </location>
</feature>
<feature type="helix" evidence="16">
    <location>
        <begin position="65"/>
        <end position="74"/>
    </location>
</feature>
<feature type="helix" evidence="16">
    <location>
        <begin position="84"/>
        <end position="112"/>
    </location>
</feature>
<feature type="helix" evidence="16">
    <location>
        <begin position="119"/>
        <end position="128"/>
    </location>
</feature>
<feature type="helix" evidence="16">
    <location>
        <begin position="132"/>
        <end position="134"/>
    </location>
</feature>
<feature type="helix" evidence="16">
    <location>
        <begin position="135"/>
        <end position="146"/>
    </location>
</feature>
<name>NFYB6_ARATH</name>
<evidence type="ECO:0000250" key="1"/>
<evidence type="ECO:0000250" key="2">
    <source>
        <dbReference type="UniProtKB" id="P13434"/>
    </source>
</evidence>
<evidence type="ECO:0000256" key="3">
    <source>
        <dbReference type="SAM" id="MobiDB-lite"/>
    </source>
</evidence>
<evidence type="ECO:0000269" key="4">
    <source>
    </source>
</evidence>
<evidence type="ECO:0000269" key="5">
    <source>
    </source>
</evidence>
<evidence type="ECO:0000269" key="6">
    <source>
    </source>
</evidence>
<evidence type="ECO:0000269" key="7">
    <source>
    </source>
</evidence>
<evidence type="ECO:0000269" key="8">
    <source>
    </source>
</evidence>
<evidence type="ECO:0000303" key="9">
    <source>
    </source>
</evidence>
<evidence type="ECO:0000303" key="10">
    <source>
    </source>
</evidence>
<evidence type="ECO:0000303" key="11">
    <source>
    </source>
</evidence>
<evidence type="ECO:0000303" key="12">
    <source>
    </source>
</evidence>
<evidence type="ECO:0000305" key="13"/>
<evidence type="ECO:0000312" key="14">
    <source>
        <dbReference type="Araport" id="AT5G47670"/>
    </source>
</evidence>
<evidence type="ECO:0000312" key="15">
    <source>
        <dbReference type="EMBL" id="BAB09093.1"/>
    </source>
</evidence>
<evidence type="ECO:0007829" key="16">
    <source>
        <dbReference type="PDB" id="5G49"/>
    </source>
</evidence>
<gene>
    <name evidence="9" type="primary">NFYB6</name>
    <name evidence="10" type="synonym">L1L</name>
    <name evidence="14" type="ordered locus">At5g47670</name>
    <name evidence="15" type="ORF">MNJ7.26</name>
</gene>
<dbReference type="EMBL" id="AY138461">
    <property type="protein sequence ID" value="AAN15924.1"/>
    <property type="molecule type" value="mRNA"/>
</dbReference>
<dbReference type="EMBL" id="AB025628">
    <property type="protein sequence ID" value="BAB09093.1"/>
    <property type="molecule type" value="Genomic_DNA"/>
</dbReference>
<dbReference type="EMBL" id="CP002688">
    <property type="protein sequence ID" value="AED95548.1"/>
    <property type="molecule type" value="Genomic_DNA"/>
</dbReference>
<dbReference type="EMBL" id="CP002688">
    <property type="protein sequence ID" value="AED95549.1"/>
    <property type="molecule type" value="Genomic_DNA"/>
</dbReference>
<dbReference type="EMBL" id="CP002688">
    <property type="protein sequence ID" value="ANM69913.1"/>
    <property type="molecule type" value="Genomic_DNA"/>
</dbReference>
<dbReference type="EMBL" id="BT004183">
    <property type="protein sequence ID" value="AAO42202.1"/>
    <property type="molecule type" value="mRNA"/>
</dbReference>
<dbReference type="RefSeq" id="NP_001078727.1">
    <molecule id="Q84W66-2"/>
    <property type="nucleotide sequence ID" value="NM_001085258.1"/>
</dbReference>
<dbReference type="RefSeq" id="NP_001318754.1">
    <molecule id="Q84W66-1"/>
    <property type="nucleotide sequence ID" value="NM_001344740.1"/>
</dbReference>
<dbReference type="RefSeq" id="NP_199578.2">
    <molecule id="Q84W66-1"/>
    <property type="nucleotide sequence ID" value="NM_124141.4"/>
</dbReference>
<dbReference type="PDB" id="5G49">
    <property type="method" value="X-ray"/>
    <property type="resolution" value="2.30 A"/>
    <property type="chains" value="A=55-147"/>
</dbReference>
<dbReference type="PDBsum" id="5G49"/>
<dbReference type="SMR" id="Q84W66"/>
<dbReference type="BioGRID" id="20066">
    <property type="interactions" value="21"/>
</dbReference>
<dbReference type="FunCoup" id="Q84W66">
    <property type="interactions" value="25"/>
</dbReference>
<dbReference type="IntAct" id="Q84W66">
    <property type="interactions" value="12"/>
</dbReference>
<dbReference type="STRING" id="3702.Q84W66"/>
<dbReference type="PaxDb" id="3702-AT5G47670.1"/>
<dbReference type="ProteomicsDB" id="250592">
    <molecule id="Q84W66-1"/>
</dbReference>
<dbReference type="EnsemblPlants" id="AT5G47670.1">
    <molecule id="Q84W66-1"/>
    <property type="protein sequence ID" value="AT5G47670.1"/>
    <property type="gene ID" value="AT5G47670"/>
</dbReference>
<dbReference type="EnsemblPlants" id="AT5G47670.2">
    <molecule id="Q84W66-2"/>
    <property type="protein sequence ID" value="AT5G47670.2"/>
    <property type="gene ID" value="AT5G47670"/>
</dbReference>
<dbReference type="EnsemblPlants" id="AT5G47670.3">
    <molecule id="Q84W66-1"/>
    <property type="protein sequence ID" value="AT5G47670.3"/>
    <property type="gene ID" value="AT5G47670"/>
</dbReference>
<dbReference type="GeneID" id="834818"/>
<dbReference type="Gramene" id="AT5G47670.1">
    <molecule id="Q84W66-1"/>
    <property type="protein sequence ID" value="AT5G47670.1"/>
    <property type="gene ID" value="AT5G47670"/>
</dbReference>
<dbReference type="Gramene" id="AT5G47670.2">
    <molecule id="Q84W66-2"/>
    <property type="protein sequence ID" value="AT5G47670.2"/>
    <property type="gene ID" value="AT5G47670"/>
</dbReference>
<dbReference type="Gramene" id="AT5G47670.3">
    <molecule id="Q84W66-1"/>
    <property type="protein sequence ID" value="AT5G47670.3"/>
    <property type="gene ID" value="AT5G47670"/>
</dbReference>
<dbReference type="KEGG" id="ath:AT5G47670"/>
<dbReference type="Araport" id="AT5G47670"/>
<dbReference type="TAIR" id="AT5G47670">
    <property type="gene designation" value="NF-YB6"/>
</dbReference>
<dbReference type="eggNOG" id="KOG0869">
    <property type="taxonomic scope" value="Eukaryota"/>
</dbReference>
<dbReference type="HOGENOM" id="CLU_066247_4_1_1"/>
<dbReference type="InParanoid" id="Q84W66"/>
<dbReference type="OMA" id="GHHQGFF"/>
<dbReference type="OrthoDB" id="386949at2759"/>
<dbReference type="PhylomeDB" id="Q84W66"/>
<dbReference type="PRO" id="PR:Q84W66"/>
<dbReference type="Proteomes" id="UP000006548">
    <property type="component" value="Chromosome 5"/>
</dbReference>
<dbReference type="ExpressionAtlas" id="Q84W66">
    <property type="expression patterns" value="baseline and differential"/>
</dbReference>
<dbReference type="GO" id="GO:0016602">
    <property type="term" value="C:CCAAT-binding factor complex"/>
    <property type="evidence" value="ECO:0007669"/>
    <property type="project" value="InterPro"/>
</dbReference>
<dbReference type="GO" id="GO:0001228">
    <property type="term" value="F:DNA-binding transcription activator activity, RNA polymerase II-specific"/>
    <property type="evidence" value="ECO:0007669"/>
    <property type="project" value="InterPro"/>
</dbReference>
<dbReference type="GO" id="GO:0003700">
    <property type="term" value="F:DNA-binding transcription factor activity"/>
    <property type="evidence" value="ECO:0000250"/>
    <property type="project" value="TAIR"/>
</dbReference>
<dbReference type="GO" id="GO:0046982">
    <property type="term" value="F:protein heterodimerization activity"/>
    <property type="evidence" value="ECO:0007669"/>
    <property type="project" value="InterPro"/>
</dbReference>
<dbReference type="GO" id="GO:0043565">
    <property type="term" value="F:sequence-specific DNA binding"/>
    <property type="evidence" value="ECO:0007669"/>
    <property type="project" value="InterPro"/>
</dbReference>
<dbReference type="GO" id="GO:0009738">
    <property type="term" value="P:abscisic acid-activated signaling pathway"/>
    <property type="evidence" value="ECO:0000315"/>
    <property type="project" value="UniProtKB"/>
</dbReference>
<dbReference type="GO" id="GO:0045893">
    <property type="term" value="P:positive regulation of DNA-templated transcription"/>
    <property type="evidence" value="ECO:0000314"/>
    <property type="project" value="TAIR"/>
</dbReference>
<dbReference type="GO" id="GO:0006355">
    <property type="term" value="P:regulation of DNA-templated transcription"/>
    <property type="evidence" value="ECO:0000304"/>
    <property type="project" value="TAIR"/>
</dbReference>
<dbReference type="GO" id="GO:0009414">
    <property type="term" value="P:response to water deprivation"/>
    <property type="evidence" value="ECO:0000270"/>
    <property type="project" value="UniProtKB"/>
</dbReference>
<dbReference type="CDD" id="cd22907">
    <property type="entry name" value="HFD_NFYB"/>
    <property type="match status" value="1"/>
</dbReference>
<dbReference type="FunFam" id="1.10.20.10:FF:000049">
    <property type="entry name" value="Nuclear transcription factor Y subunit B-6"/>
    <property type="match status" value="1"/>
</dbReference>
<dbReference type="Gene3D" id="1.10.20.10">
    <property type="entry name" value="Histone, subunit A"/>
    <property type="match status" value="1"/>
</dbReference>
<dbReference type="InterPro" id="IPR003958">
    <property type="entry name" value="CBFA_NFYB_domain"/>
</dbReference>
<dbReference type="InterPro" id="IPR009072">
    <property type="entry name" value="Histone-fold"/>
</dbReference>
<dbReference type="InterPro" id="IPR027113">
    <property type="entry name" value="Transc_fact_NFYB/HAP3"/>
</dbReference>
<dbReference type="InterPro" id="IPR003956">
    <property type="entry name" value="Transcrpt_fac_NFYB/HAP3_CS"/>
</dbReference>
<dbReference type="PANTHER" id="PTHR11064">
    <property type="entry name" value="CCAAT-BINDING TRANSCRIPTION FACTOR-RELATED"/>
    <property type="match status" value="1"/>
</dbReference>
<dbReference type="PANTHER" id="PTHR11064:SF196">
    <property type="entry name" value="NUCLEAR TRANSCRIPTION FACTOR Y SUBUNIT B-6"/>
    <property type="match status" value="1"/>
</dbReference>
<dbReference type="Pfam" id="PF00808">
    <property type="entry name" value="CBFD_NFYB_HMF"/>
    <property type="match status" value="1"/>
</dbReference>
<dbReference type="PRINTS" id="PR00615">
    <property type="entry name" value="CCAATSUBUNTA"/>
</dbReference>
<dbReference type="SUPFAM" id="SSF47113">
    <property type="entry name" value="Histone-fold"/>
    <property type="match status" value="1"/>
</dbReference>
<dbReference type="PROSITE" id="PS00685">
    <property type="entry name" value="NFYB_HAP3"/>
    <property type="match status" value="1"/>
</dbReference>
<comment type="function">
    <text evidence="5 6">Component of the NF-Y/HAP transcription factor complex. The NF-Y complex stimulates the transcription of various genes by recognizing and binding to a CCAAT motif in promoters. Plays a role in the regulation of the embryogenesis. Involved in the abscisic acid (ABA) signaling pathway.</text>
</comment>
<comment type="subunit">
    <text evidence="6 7 8">Heterotrimeric transcription factor composed of three components, NF-YA, NF-YB and NF-YC (PubMed:27871811). NF-YB and NF-YC must interact and dimerize for NF-YA association and DNA binding (PubMed:27871811). Interacts with PRN1 (PubMed:17322342). Binds directly with DPB3-1 (PubMed:25490919).</text>
</comment>
<comment type="interaction">
    <interactant intactId="EBI-1751693">
        <id>Q84W66</id>
    </interactant>
    <interactant intactId="EBI-1606661">
        <id>Q9LX49</id>
        <label>PRN1</label>
    </interactant>
    <organismsDiffer>false</organismsDiffer>
    <experiments>2</experiments>
</comment>
<comment type="interaction">
    <interactant intactId="EBI-15191739">
        <id>Q84W66-2</id>
    </interactant>
    <interactant intactId="EBI-4461992">
        <id>Q9LN09</id>
        <label>DPB3-1</label>
    </interactant>
    <organismsDiffer>false</organismsDiffer>
    <experiments>3</experiments>
</comment>
<comment type="interaction">
    <interactant intactId="EBI-15191739">
        <id>Q84W66-2</id>
    </interactant>
    <interactant intactId="EBI-15191737">
        <id>Q58CM8</id>
        <label>NFYC10</label>
    </interactant>
    <organismsDiffer>false</organismsDiffer>
    <experiments>3</experiments>
</comment>
<comment type="interaction">
    <interactant intactId="EBI-15191739">
        <id>Q84W66-2</id>
    </interactant>
    <interactant intactId="EBI-2466133">
        <id>Q9FGP8</id>
        <label>NFYC7</label>
    </interactant>
    <organismsDiffer>false</organismsDiffer>
    <experiments>3</experiments>
</comment>
<comment type="interaction">
    <interactant intactId="EBI-15191739">
        <id>Q84W66-2</id>
    </interactant>
    <interactant intactId="EBI-15191571">
        <id>Q4PSE2</id>
        <label>NFYC8</label>
    </interactant>
    <organismsDiffer>false</organismsDiffer>
    <experiments>3</experiments>
</comment>
<comment type="interaction">
    <interactant intactId="EBI-15191739">
        <id>Q84W66-2</id>
    </interactant>
    <interactant intactId="EBI-2466050">
        <id>Q8L4B2</id>
        <label>NFYC9</label>
    </interactant>
    <organismsDiffer>false</organismsDiffer>
    <experiments>3</experiments>
</comment>
<comment type="subcellular location">
    <subcellularLocation>
        <location evidence="13">Nucleus</location>
    </subcellularLocation>
</comment>
<comment type="alternative products">
    <event type="alternative splicing"/>
    <isoform>
        <id>Q84W66-1</id>
        <name>1</name>
        <sequence type="displayed"/>
    </isoform>
    <isoform>
        <id>Q84W66-2</id>
        <name>2</name>
        <sequence type="described" ref="VSP_016045"/>
    </isoform>
</comment>
<comment type="tissue specificity">
    <text evidence="4 5 6">Expressed in roots, flowers and developing siliques. Present in etiolated seedlings.</text>
</comment>
<comment type="developmental stage">
    <text evidence="5">Expressed primarily during seed development.</text>
</comment>
<comment type="induction">
    <text evidence="7">Enhanced by dehydration stress.</text>
</comment>
<comment type="disruption phenotype">
    <text evidence="6">Altered response to abscisic acid (ABA).</text>
</comment>
<comment type="similarity">
    <text evidence="13">Belongs to the NFYB/HAP3 subunit family.</text>
</comment>
<keyword id="KW-0002">3D-structure</keyword>
<keyword id="KW-0938">Abscisic acid signaling pathway</keyword>
<keyword id="KW-0010">Activator</keyword>
<keyword id="KW-0025">Alternative splicing</keyword>
<keyword id="KW-0238">DNA-binding</keyword>
<keyword id="KW-0539">Nucleus</keyword>
<keyword id="KW-1185">Reference proteome</keyword>
<keyword id="KW-0804">Transcription</keyword>
<keyword id="KW-0805">Transcription regulation</keyword>
<accession>Q84W66</accession>
<accession>Q8GV55</accession>
<accession>Q9FGJ0</accession>
<proteinExistence type="evidence at protein level"/>